<feature type="chain" id="PRO_0000093230" description="Probable metal transport system ATP-binding protein CPn_0348/CP_0412/CPj0348/CpB0355">
    <location>
        <begin position="1"/>
        <end position="259"/>
    </location>
</feature>
<feature type="domain" description="ABC transporter" evidence="1">
    <location>
        <begin position="3"/>
        <end position="241"/>
    </location>
</feature>
<feature type="binding site" evidence="1">
    <location>
        <begin position="41"/>
        <end position="48"/>
    </location>
    <ligand>
        <name>ATP</name>
        <dbReference type="ChEBI" id="CHEBI:30616"/>
    </ligand>
</feature>
<name>Y348_CHLPN</name>
<accession>Q9Z8J5</accession>
<reference key="1">
    <citation type="journal article" date="1999" name="Nat. Genet.">
        <title>Comparative genomes of Chlamydia pneumoniae and C. trachomatis.</title>
        <authorList>
            <person name="Kalman S."/>
            <person name="Mitchell W.P."/>
            <person name="Marathe R."/>
            <person name="Lammel C.J."/>
            <person name="Fan J."/>
            <person name="Hyman R.W."/>
            <person name="Olinger L."/>
            <person name="Grimwood J."/>
            <person name="Davis R.W."/>
            <person name="Stephens R.S."/>
        </authorList>
    </citation>
    <scope>NUCLEOTIDE SEQUENCE [LARGE SCALE GENOMIC DNA]</scope>
    <source>
        <strain>CWL029</strain>
    </source>
</reference>
<reference key="2">
    <citation type="journal article" date="2000" name="Nucleic Acids Res.">
        <title>Genome sequences of Chlamydia trachomatis MoPn and Chlamydia pneumoniae AR39.</title>
        <authorList>
            <person name="Read T.D."/>
            <person name="Brunham R.C."/>
            <person name="Shen C."/>
            <person name="Gill S.R."/>
            <person name="Heidelberg J.F."/>
            <person name="White O."/>
            <person name="Hickey E.K."/>
            <person name="Peterson J.D."/>
            <person name="Utterback T.R."/>
            <person name="Berry K.J."/>
            <person name="Bass S."/>
            <person name="Linher K.D."/>
            <person name="Weidman J.F."/>
            <person name="Khouri H.M."/>
            <person name="Craven B."/>
            <person name="Bowman C."/>
            <person name="Dodson R.J."/>
            <person name="Gwinn M.L."/>
            <person name="Nelson W.C."/>
            <person name="DeBoy R.T."/>
            <person name="Kolonay J.F."/>
            <person name="McClarty G."/>
            <person name="Salzberg S.L."/>
            <person name="Eisen J.A."/>
            <person name="Fraser C.M."/>
        </authorList>
    </citation>
    <scope>NUCLEOTIDE SEQUENCE [LARGE SCALE GENOMIC DNA]</scope>
    <source>
        <strain>AR39</strain>
    </source>
</reference>
<reference key="3">
    <citation type="journal article" date="2000" name="Nucleic Acids Res.">
        <title>Comparison of whole genome sequences of Chlamydia pneumoniae J138 from Japan and CWL029 from USA.</title>
        <authorList>
            <person name="Shirai M."/>
            <person name="Hirakawa H."/>
            <person name="Kimoto M."/>
            <person name="Tabuchi M."/>
            <person name="Kishi F."/>
            <person name="Ouchi K."/>
            <person name="Shiba T."/>
            <person name="Ishii K."/>
            <person name="Hattori M."/>
            <person name="Kuhara S."/>
            <person name="Nakazawa T."/>
        </authorList>
    </citation>
    <scope>NUCLEOTIDE SEQUENCE [LARGE SCALE GENOMIC DNA]</scope>
    <source>
        <strain>J138</strain>
    </source>
</reference>
<reference key="4">
    <citation type="submission" date="2002-05" db="EMBL/GenBank/DDBJ databases">
        <title>The genome sequence of Chlamydia pneumoniae TW183 and comparison with other Chlamydia strains based on whole genome sequence analysis.</title>
        <authorList>
            <person name="Geng M.M."/>
            <person name="Schuhmacher A."/>
            <person name="Muehldorfer I."/>
            <person name="Bensch K.W."/>
            <person name="Schaefer K.P."/>
            <person name="Schneider S."/>
            <person name="Pohl T."/>
            <person name="Essig A."/>
            <person name="Marre R."/>
            <person name="Melchers K."/>
        </authorList>
    </citation>
    <scope>NUCLEOTIDE SEQUENCE [LARGE SCALE GENOMIC DNA]</scope>
    <source>
        <strain>TW-183</strain>
    </source>
</reference>
<protein>
    <recommendedName>
        <fullName>Probable metal transport system ATP-binding protein CPn_0348/CP_0412/CPj0348/CpB0355</fullName>
    </recommendedName>
</protein>
<sequence>MNVKDETFWSVHNLCVNYEHAAVLYHISFSLGKGSLTAILGPNGAGKSTLLKASLGLIKPSSGTVYFFNQKFKKVRQRIAYMPQRASVDWDFPMTVLDLALMGCYSYKGMWGRISSDDRREAFHILERVGLESVADRQIGQLSGGQQQRAFLARALMQKADLYLMDELFSAIDMASFKTSVGVLQELRDQGKTIVVVHHDLSHVRQLFDHVVLLNKRLICCGPTDECLNGDTIFQTYGCEIELLEQTLKLSRGKQFGSC</sequence>
<gene>
    <name type="ordered locus">CPn_0348</name>
    <name type="ordered locus">CP_0412</name>
    <name type="ordered locus">CPj0348</name>
    <name type="ordered locus">CpB0355</name>
</gene>
<dbReference type="EMBL" id="AE001363">
    <property type="protein sequence ID" value="AAD18492.1"/>
    <property type="molecule type" value="Genomic_DNA"/>
</dbReference>
<dbReference type="EMBL" id="AE002161">
    <property type="protein sequence ID" value="AAF38256.1"/>
    <property type="molecule type" value="Genomic_DNA"/>
</dbReference>
<dbReference type="EMBL" id="BA000008">
    <property type="protein sequence ID" value="BAA98556.1"/>
    <property type="molecule type" value="Genomic_DNA"/>
</dbReference>
<dbReference type="EMBL" id="AE009440">
    <property type="protein sequence ID" value="AAP98286.1"/>
    <property type="molecule type" value="Genomic_DNA"/>
</dbReference>
<dbReference type="PIR" id="B72089">
    <property type="entry name" value="B72089"/>
</dbReference>
<dbReference type="PIR" id="B86534">
    <property type="entry name" value="B86534"/>
</dbReference>
<dbReference type="RefSeq" id="NP_224548.1">
    <property type="nucleotide sequence ID" value="NC_000922.1"/>
</dbReference>
<dbReference type="RefSeq" id="WP_010882991.1">
    <property type="nucleotide sequence ID" value="NZ_LN847257.1"/>
</dbReference>
<dbReference type="SMR" id="Q9Z8J5"/>
<dbReference type="STRING" id="406984.CPK_ORF00855"/>
<dbReference type="GeneID" id="45050393"/>
<dbReference type="KEGG" id="cpa:CP_0412"/>
<dbReference type="KEGG" id="cpj:ytgB_1"/>
<dbReference type="KEGG" id="cpn:CPn_0348"/>
<dbReference type="KEGG" id="cpt:CpB0355"/>
<dbReference type="PATRIC" id="fig|115713.3.peg.384"/>
<dbReference type="eggNOG" id="COG1121">
    <property type="taxonomic scope" value="Bacteria"/>
</dbReference>
<dbReference type="HOGENOM" id="CLU_000604_1_11_0"/>
<dbReference type="OrthoDB" id="9806726at2"/>
<dbReference type="Proteomes" id="UP000000583">
    <property type="component" value="Chromosome"/>
</dbReference>
<dbReference type="Proteomes" id="UP000000801">
    <property type="component" value="Chromosome"/>
</dbReference>
<dbReference type="GO" id="GO:0005886">
    <property type="term" value="C:plasma membrane"/>
    <property type="evidence" value="ECO:0007669"/>
    <property type="project" value="UniProtKB-SubCell"/>
</dbReference>
<dbReference type="GO" id="GO:0005524">
    <property type="term" value="F:ATP binding"/>
    <property type="evidence" value="ECO:0007669"/>
    <property type="project" value="UniProtKB-KW"/>
</dbReference>
<dbReference type="GO" id="GO:0016887">
    <property type="term" value="F:ATP hydrolysis activity"/>
    <property type="evidence" value="ECO:0007669"/>
    <property type="project" value="InterPro"/>
</dbReference>
<dbReference type="CDD" id="cd03235">
    <property type="entry name" value="ABC_Metallic_Cations"/>
    <property type="match status" value="1"/>
</dbReference>
<dbReference type="FunFam" id="3.40.50.300:FF:000134">
    <property type="entry name" value="Iron-enterobactin ABC transporter ATP-binding protein"/>
    <property type="match status" value="1"/>
</dbReference>
<dbReference type="Gene3D" id="3.40.50.300">
    <property type="entry name" value="P-loop containing nucleotide triphosphate hydrolases"/>
    <property type="match status" value="1"/>
</dbReference>
<dbReference type="InterPro" id="IPR003593">
    <property type="entry name" value="AAA+_ATPase"/>
</dbReference>
<dbReference type="InterPro" id="IPR003439">
    <property type="entry name" value="ABC_transporter-like_ATP-bd"/>
</dbReference>
<dbReference type="InterPro" id="IPR017871">
    <property type="entry name" value="ABC_transporter-like_CS"/>
</dbReference>
<dbReference type="InterPro" id="IPR050153">
    <property type="entry name" value="Metal_Ion_Import_ABC"/>
</dbReference>
<dbReference type="InterPro" id="IPR027417">
    <property type="entry name" value="P-loop_NTPase"/>
</dbReference>
<dbReference type="PANTHER" id="PTHR42734:SF5">
    <property type="entry name" value="IRON TRANSPORT SYSTEM ATP-BINDING PROTEIN HI_0361-RELATED"/>
    <property type="match status" value="1"/>
</dbReference>
<dbReference type="PANTHER" id="PTHR42734">
    <property type="entry name" value="METAL TRANSPORT SYSTEM ATP-BINDING PROTEIN TM_0124-RELATED"/>
    <property type="match status" value="1"/>
</dbReference>
<dbReference type="Pfam" id="PF00005">
    <property type="entry name" value="ABC_tran"/>
    <property type="match status" value="1"/>
</dbReference>
<dbReference type="SMART" id="SM00382">
    <property type="entry name" value="AAA"/>
    <property type="match status" value="1"/>
</dbReference>
<dbReference type="SUPFAM" id="SSF52540">
    <property type="entry name" value="P-loop containing nucleoside triphosphate hydrolases"/>
    <property type="match status" value="1"/>
</dbReference>
<dbReference type="PROSITE" id="PS00211">
    <property type="entry name" value="ABC_TRANSPORTER_1"/>
    <property type="match status" value="1"/>
</dbReference>
<dbReference type="PROSITE" id="PS50893">
    <property type="entry name" value="ABC_TRANSPORTER_2"/>
    <property type="match status" value="1"/>
</dbReference>
<organism>
    <name type="scientific">Chlamydia pneumoniae</name>
    <name type="common">Chlamydophila pneumoniae</name>
    <dbReference type="NCBI Taxonomy" id="83558"/>
    <lineage>
        <taxon>Bacteria</taxon>
        <taxon>Pseudomonadati</taxon>
        <taxon>Chlamydiota</taxon>
        <taxon>Chlamydiia</taxon>
        <taxon>Chlamydiales</taxon>
        <taxon>Chlamydiaceae</taxon>
        <taxon>Chlamydia/Chlamydophila group</taxon>
        <taxon>Chlamydia</taxon>
    </lineage>
</organism>
<keyword id="KW-0067">ATP-binding</keyword>
<keyword id="KW-0997">Cell inner membrane</keyword>
<keyword id="KW-1003">Cell membrane</keyword>
<keyword id="KW-0472">Membrane</keyword>
<keyword id="KW-0547">Nucleotide-binding</keyword>
<keyword id="KW-0813">Transport</keyword>
<comment type="function">
    <text>Part of an ATP-driven transport system CPn0346/CPn0347/CPn0348/CPn0349 for a metal. Probably responsible for energy coupling to the transport system.</text>
</comment>
<comment type="subcellular location">
    <subcellularLocation>
        <location evidence="2">Cell inner membrane</location>
        <topology evidence="2">Peripheral membrane protein</topology>
    </subcellularLocation>
</comment>
<comment type="similarity">
    <text evidence="2">Belongs to the ABC transporter superfamily.</text>
</comment>
<evidence type="ECO:0000255" key="1">
    <source>
        <dbReference type="PROSITE-ProRule" id="PRU00434"/>
    </source>
</evidence>
<evidence type="ECO:0000305" key="2"/>
<proteinExistence type="inferred from homology"/>